<reference key="1">
    <citation type="journal article" date="2010" name="BMC Genomics">
        <title>Salmo salar and Esox lucius full-length cDNA sequences reveal changes in evolutionary pressures on a post-tetraploidization genome.</title>
        <authorList>
            <person name="Leong J.S."/>
            <person name="Jantzen S.G."/>
            <person name="von Schalburg K.R."/>
            <person name="Cooper G.A."/>
            <person name="Messmer A.M."/>
            <person name="Liao N.Y."/>
            <person name="Munro S."/>
            <person name="Moore R."/>
            <person name="Holt R.A."/>
            <person name="Jones S.J."/>
            <person name="Davidson W.S."/>
            <person name="Koop B.F."/>
        </authorList>
    </citation>
    <scope>NUCLEOTIDE SEQUENCE [LARGE SCALE MRNA]</scope>
    <source>
        <tissue>Thymus</tissue>
    </source>
</reference>
<sequence>MARGCLCCVKYMLFLFNLLFWLGGCGLLGVGVWLSVSQGSFATLSPSFPSISAANLIITLGAVIMVTGFLGCLGAIKENKCLLLSFFITLLVILLAELILLILFFVYTDNVSENARQDLKEGLALYSTNNNAGLRNAWNTIQTEWHCCGVNGYTDWHTALQEKVVPDHCCQDIYQDCGRNATNQFWTRGCYEKVEEWLDDNKHLLGTIAMCVLVIQLLGMAFSMTLYQQIHRSGKKYEA</sequence>
<organism>
    <name type="scientific">Salmo salar</name>
    <name type="common">Atlantic salmon</name>
    <dbReference type="NCBI Taxonomy" id="8030"/>
    <lineage>
        <taxon>Eukaryota</taxon>
        <taxon>Metazoa</taxon>
        <taxon>Chordata</taxon>
        <taxon>Craniata</taxon>
        <taxon>Vertebrata</taxon>
        <taxon>Euteleostomi</taxon>
        <taxon>Actinopterygii</taxon>
        <taxon>Neopterygii</taxon>
        <taxon>Teleostei</taxon>
        <taxon>Protacanthopterygii</taxon>
        <taxon>Salmoniformes</taxon>
        <taxon>Salmonidae</taxon>
        <taxon>Salmoninae</taxon>
        <taxon>Salmo</taxon>
    </lineage>
</organism>
<evidence type="ECO:0000250" key="1"/>
<evidence type="ECO:0000255" key="2"/>
<evidence type="ECO:0000305" key="3"/>
<keyword id="KW-0325">Glycoprotein</keyword>
<keyword id="KW-0472">Membrane</keyword>
<keyword id="KW-1185">Reference proteome</keyword>
<keyword id="KW-0812">Transmembrane</keyword>
<keyword id="KW-1133">Transmembrane helix</keyword>
<comment type="subcellular location">
    <subcellularLocation>
        <location evidence="1">Membrane</location>
        <topology evidence="1">Multi-pass membrane protein</topology>
    </subcellularLocation>
</comment>
<comment type="similarity">
    <text evidence="3">Belongs to the tetraspanin (TM4SF) family.</text>
</comment>
<gene>
    <name type="primary">tspan9</name>
</gene>
<proteinExistence type="evidence at transcript level"/>
<dbReference type="EMBL" id="BT045605">
    <property type="protein sequence ID" value="ACI33867.1"/>
    <property type="molecule type" value="mRNA"/>
</dbReference>
<dbReference type="EMBL" id="BT057676">
    <property type="protein sequence ID" value="ACM09548.1"/>
    <property type="molecule type" value="mRNA"/>
</dbReference>
<dbReference type="RefSeq" id="NP_001135116.1">
    <property type="nucleotide sequence ID" value="NM_001141644.1"/>
</dbReference>
<dbReference type="RefSeq" id="XP_014008808.1">
    <property type="nucleotide sequence ID" value="XM_014153333.1"/>
</dbReference>
<dbReference type="RefSeq" id="XP_014008809.1">
    <property type="nucleotide sequence ID" value="XM_014153334.1"/>
</dbReference>
<dbReference type="RefSeq" id="XP_014008810.1">
    <property type="nucleotide sequence ID" value="XM_014153335.1"/>
</dbReference>
<dbReference type="SMR" id="B5X3I6"/>
<dbReference type="STRING" id="8030.ENSSSAP00000102427"/>
<dbReference type="GlyCosmos" id="B5X3I6">
    <property type="glycosylation" value="2 sites, No reported glycans"/>
</dbReference>
<dbReference type="PaxDb" id="8030-ENSSSAP00000047974"/>
<dbReference type="Ensembl" id="ENSSSAT00070040647">
    <property type="protein sequence ID" value="ENSSSAP00070038851"/>
    <property type="gene ID" value="ENSSSAG00070025433"/>
</dbReference>
<dbReference type="GeneID" id="100196615"/>
<dbReference type="KEGG" id="sasa:100196615"/>
<dbReference type="CTD" id="100305174"/>
<dbReference type="OrthoDB" id="418219at7898"/>
<dbReference type="Proteomes" id="UP000087266">
    <property type="component" value="Chromosome ssa17"/>
</dbReference>
<dbReference type="Bgee" id="ENSSSAG00000057672">
    <property type="expression patterns" value="Expressed in testis and 26 other cell types or tissues"/>
</dbReference>
<dbReference type="GO" id="GO:0005886">
    <property type="term" value="C:plasma membrane"/>
    <property type="evidence" value="ECO:0007669"/>
    <property type="project" value="TreeGrafter"/>
</dbReference>
<dbReference type="CDD" id="cd03165">
    <property type="entry name" value="NET-5_like_LEL"/>
    <property type="match status" value="1"/>
</dbReference>
<dbReference type="Gene3D" id="1.10.1450.10">
    <property type="entry name" value="Tetraspanin"/>
    <property type="match status" value="1"/>
</dbReference>
<dbReference type="InterPro" id="IPR018499">
    <property type="entry name" value="Tetraspanin/Peripherin"/>
</dbReference>
<dbReference type="InterPro" id="IPR000301">
    <property type="entry name" value="Tetraspanin_animals"/>
</dbReference>
<dbReference type="InterPro" id="IPR018503">
    <property type="entry name" value="Tetraspanin_CS"/>
</dbReference>
<dbReference type="InterPro" id="IPR008952">
    <property type="entry name" value="Tetraspanin_EC2_sf"/>
</dbReference>
<dbReference type="PANTHER" id="PTHR19282">
    <property type="entry name" value="TETRASPANIN"/>
    <property type="match status" value="1"/>
</dbReference>
<dbReference type="PANTHER" id="PTHR19282:SF364">
    <property type="entry name" value="TETRASPANIN-9"/>
    <property type="match status" value="1"/>
</dbReference>
<dbReference type="Pfam" id="PF00335">
    <property type="entry name" value="Tetraspanin"/>
    <property type="match status" value="1"/>
</dbReference>
<dbReference type="PIRSF" id="PIRSF002419">
    <property type="entry name" value="Tetraspanin"/>
    <property type="match status" value="1"/>
</dbReference>
<dbReference type="PRINTS" id="PR00259">
    <property type="entry name" value="TMFOUR"/>
</dbReference>
<dbReference type="SUPFAM" id="SSF48652">
    <property type="entry name" value="Tetraspanin"/>
    <property type="match status" value="1"/>
</dbReference>
<dbReference type="PROSITE" id="PS00421">
    <property type="entry name" value="TM4_1"/>
    <property type="match status" value="1"/>
</dbReference>
<feature type="chain" id="PRO_0000375884" description="Tetraspanin-9">
    <location>
        <begin position="1"/>
        <end position="239"/>
    </location>
</feature>
<feature type="topological domain" description="Cytoplasmic" evidence="2">
    <location>
        <begin position="1"/>
        <end position="12"/>
    </location>
</feature>
<feature type="transmembrane region" description="Helical" evidence="2">
    <location>
        <begin position="13"/>
        <end position="33"/>
    </location>
</feature>
<feature type="topological domain" description="Extracellular" evidence="2">
    <location>
        <begin position="34"/>
        <end position="55"/>
    </location>
</feature>
<feature type="transmembrane region" description="Helical" evidence="2">
    <location>
        <begin position="56"/>
        <end position="76"/>
    </location>
</feature>
<feature type="topological domain" description="Cytoplasmic" evidence="2">
    <location>
        <begin position="77"/>
        <end position="85"/>
    </location>
</feature>
<feature type="transmembrane region" description="Helical" evidence="2">
    <location>
        <begin position="86"/>
        <end position="106"/>
    </location>
</feature>
<feature type="topological domain" description="Extracellular" evidence="2">
    <location>
        <begin position="107"/>
        <end position="203"/>
    </location>
</feature>
<feature type="transmembrane region" description="Helical" evidence="2">
    <location>
        <begin position="204"/>
        <end position="224"/>
    </location>
</feature>
<feature type="topological domain" description="Cytoplasmic" evidence="2">
    <location>
        <begin position="225"/>
        <end position="239"/>
    </location>
</feature>
<feature type="glycosylation site" description="N-linked (GlcNAc...) asparagine" evidence="2">
    <location>
        <position position="110"/>
    </location>
</feature>
<feature type="glycosylation site" description="N-linked (GlcNAc...) asparagine" evidence="2">
    <location>
        <position position="180"/>
    </location>
</feature>
<protein>
    <recommendedName>
        <fullName>Tetraspanin-9</fullName>
        <shortName>Tspan-9</shortName>
    </recommendedName>
</protein>
<name>TSN9_SALSA</name>
<accession>B5X3I6</accession>